<feature type="chain" id="PRO_0000073306" description="ATP synthase gamma chain">
    <location>
        <begin position="1"/>
        <end position="299"/>
    </location>
</feature>
<name>ATPG_LEIXX</name>
<evidence type="ECO:0000255" key="1">
    <source>
        <dbReference type="HAMAP-Rule" id="MF_00815"/>
    </source>
</evidence>
<sequence>MGAQLRVYRQKIKSAHRTKKITRAMELISASRIQKEQARVAASSPYARAITRAVSAVATYSNVGHVLTTEPEKIERAVIVIFSSDRGLAGAFNSNVLKESEKLAELLRSQGKEVVYFLIGRKAQGYFSFRRRAFERVWTGNTDAPEFEQAKEVADAILESFLRDSADGGVDEIHVIYNRFVSMLTQEPQVVRLLPMEVVEGVEEPDRTQVLPLYEFEPDVNTVLDSLLPVYIESRIFNAMLQSAASKHAATQKAMKAASDNADKLITDYTRLANNARQAEITQQISEIVGGADALSSAN</sequence>
<comment type="function">
    <text evidence="1">Produces ATP from ADP in the presence of a proton gradient across the membrane. The gamma chain is believed to be important in regulating ATPase activity and the flow of protons through the CF(0) complex.</text>
</comment>
<comment type="subunit">
    <text evidence="1">F-type ATPases have 2 components, CF(1) - the catalytic core - and CF(0) - the membrane proton channel. CF(1) has five subunits: alpha(3), beta(3), gamma(1), delta(1), epsilon(1). CF(0) has three main subunits: a, b and c.</text>
</comment>
<comment type="subcellular location">
    <subcellularLocation>
        <location evidence="1">Cell membrane</location>
        <topology evidence="1">Peripheral membrane protein</topology>
    </subcellularLocation>
</comment>
<comment type="similarity">
    <text evidence="1">Belongs to the ATPase gamma chain family.</text>
</comment>
<gene>
    <name evidence="1" type="primary">atpG</name>
    <name type="ordered locus">Lxx07040</name>
</gene>
<reference key="1">
    <citation type="journal article" date="2004" name="Mol. Plant Microbe Interact.">
        <title>The genome sequence of the Gram-positive sugarcane pathogen Leifsonia xyli subsp. xyli.</title>
        <authorList>
            <person name="Monteiro-Vitorello C.B."/>
            <person name="Camargo L.E.A."/>
            <person name="Van Sluys M.A."/>
            <person name="Kitajima J.P."/>
            <person name="Truffi D."/>
            <person name="do Amaral A.M."/>
            <person name="Harakava R."/>
            <person name="de Oliveira J.C.F."/>
            <person name="Wood D."/>
            <person name="de Oliveira M.C."/>
            <person name="Miyaki C.Y."/>
            <person name="Takita M.A."/>
            <person name="da Silva A.C.R."/>
            <person name="Furlan L.R."/>
            <person name="Carraro D.M."/>
            <person name="Camarotte G."/>
            <person name="Almeida N.F. Jr."/>
            <person name="Carrer H."/>
            <person name="Coutinho L.L."/>
            <person name="El-Dorry H.A."/>
            <person name="Ferro M.I.T."/>
            <person name="Gagliardi P.R."/>
            <person name="Giglioti E."/>
            <person name="Goldman M.H.S."/>
            <person name="Goldman G.H."/>
            <person name="Kimura E.T."/>
            <person name="Ferro E.S."/>
            <person name="Kuramae E.E."/>
            <person name="Lemos E.G.M."/>
            <person name="Lemos M.V.F."/>
            <person name="Mauro S.M.Z."/>
            <person name="Machado M.A."/>
            <person name="Marino C.L."/>
            <person name="Menck C.F."/>
            <person name="Nunes L.R."/>
            <person name="Oliveira R.C."/>
            <person name="Pereira G.G."/>
            <person name="Siqueira W."/>
            <person name="de Souza A.A."/>
            <person name="Tsai S.M."/>
            <person name="Zanca A.S."/>
            <person name="Simpson A.J.G."/>
            <person name="Brumbley S.M."/>
            <person name="Setubal J.C."/>
        </authorList>
    </citation>
    <scope>NUCLEOTIDE SEQUENCE [LARGE SCALE GENOMIC DNA]</scope>
    <source>
        <strain>CTCB07</strain>
    </source>
</reference>
<accession>Q6AG59</accession>
<organism>
    <name type="scientific">Leifsonia xyli subsp. xyli (strain CTCB07)</name>
    <dbReference type="NCBI Taxonomy" id="281090"/>
    <lineage>
        <taxon>Bacteria</taxon>
        <taxon>Bacillati</taxon>
        <taxon>Actinomycetota</taxon>
        <taxon>Actinomycetes</taxon>
        <taxon>Micrococcales</taxon>
        <taxon>Microbacteriaceae</taxon>
        <taxon>Leifsonia</taxon>
    </lineage>
</organism>
<keyword id="KW-0066">ATP synthesis</keyword>
<keyword id="KW-1003">Cell membrane</keyword>
<keyword id="KW-0139">CF(1)</keyword>
<keyword id="KW-0375">Hydrogen ion transport</keyword>
<keyword id="KW-0406">Ion transport</keyword>
<keyword id="KW-0472">Membrane</keyword>
<keyword id="KW-1185">Reference proteome</keyword>
<keyword id="KW-0813">Transport</keyword>
<protein>
    <recommendedName>
        <fullName evidence="1">ATP synthase gamma chain</fullName>
    </recommendedName>
    <alternativeName>
        <fullName evidence="1">ATP synthase F1 sector gamma subunit</fullName>
    </alternativeName>
    <alternativeName>
        <fullName evidence="1">F-ATPase gamma subunit</fullName>
    </alternativeName>
</protein>
<dbReference type="EMBL" id="AE016822">
    <property type="protein sequence ID" value="AAT88636.1"/>
    <property type="molecule type" value="Genomic_DNA"/>
</dbReference>
<dbReference type="RefSeq" id="WP_011185635.1">
    <property type="nucleotide sequence ID" value="NC_006087.1"/>
</dbReference>
<dbReference type="SMR" id="Q6AG59"/>
<dbReference type="STRING" id="281090.Lxx07040"/>
<dbReference type="KEGG" id="lxx:Lxx07040"/>
<dbReference type="eggNOG" id="COG0224">
    <property type="taxonomic scope" value="Bacteria"/>
</dbReference>
<dbReference type="HOGENOM" id="CLU_050669_0_0_11"/>
<dbReference type="Proteomes" id="UP000001306">
    <property type="component" value="Chromosome"/>
</dbReference>
<dbReference type="GO" id="GO:0005886">
    <property type="term" value="C:plasma membrane"/>
    <property type="evidence" value="ECO:0007669"/>
    <property type="project" value="UniProtKB-SubCell"/>
</dbReference>
<dbReference type="GO" id="GO:0045259">
    <property type="term" value="C:proton-transporting ATP synthase complex"/>
    <property type="evidence" value="ECO:0007669"/>
    <property type="project" value="UniProtKB-KW"/>
</dbReference>
<dbReference type="GO" id="GO:0005524">
    <property type="term" value="F:ATP binding"/>
    <property type="evidence" value="ECO:0007669"/>
    <property type="project" value="UniProtKB-UniRule"/>
</dbReference>
<dbReference type="GO" id="GO:0046933">
    <property type="term" value="F:proton-transporting ATP synthase activity, rotational mechanism"/>
    <property type="evidence" value="ECO:0007669"/>
    <property type="project" value="UniProtKB-UniRule"/>
</dbReference>
<dbReference type="GO" id="GO:0042777">
    <property type="term" value="P:proton motive force-driven plasma membrane ATP synthesis"/>
    <property type="evidence" value="ECO:0007669"/>
    <property type="project" value="UniProtKB-UniRule"/>
</dbReference>
<dbReference type="CDD" id="cd12151">
    <property type="entry name" value="F1-ATPase_gamma"/>
    <property type="match status" value="1"/>
</dbReference>
<dbReference type="Gene3D" id="3.40.1380.10">
    <property type="match status" value="1"/>
</dbReference>
<dbReference type="Gene3D" id="1.10.287.80">
    <property type="entry name" value="ATP synthase, gamma subunit, helix hairpin domain"/>
    <property type="match status" value="1"/>
</dbReference>
<dbReference type="HAMAP" id="MF_00815">
    <property type="entry name" value="ATP_synth_gamma_bact"/>
    <property type="match status" value="1"/>
</dbReference>
<dbReference type="InterPro" id="IPR035968">
    <property type="entry name" value="ATP_synth_F1_ATPase_gsu"/>
</dbReference>
<dbReference type="InterPro" id="IPR000131">
    <property type="entry name" value="ATP_synth_F1_gsu"/>
</dbReference>
<dbReference type="NCBIfam" id="TIGR01146">
    <property type="entry name" value="ATPsyn_F1gamma"/>
    <property type="match status" value="1"/>
</dbReference>
<dbReference type="NCBIfam" id="NF004145">
    <property type="entry name" value="PRK05621.1-2"/>
    <property type="match status" value="1"/>
</dbReference>
<dbReference type="PANTHER" id="PTHR11693">
    <property type="entry name" value="ATP SYNTHASE GAMMA CHAIN"/>
    <property type="match status" value="1"/>
</dbReference>
<dbReference type="PANTHER" id="PTHR11693:SF22">
    <property type="entry name" value="ATP SYNTHASE SUBUNIT GAMMA, MITOCHONDRIAL"/>
    <property type="match status" value="1"/>
</dbReference>
<dbReference type="Pfam" id="PF00231">
    <property type="entry name" value="ATP-synt"/>
    <property type="match status" value="1"/>
</dbReference>
<dbReference type="PRINTS" id="PR00126">
    <property type="entry name" value="ATPASEGAMMA"/>
</dbReference>
<dbReference type="SUPFAM" id="SSF52943">
    <property type="entry name" value="ATP synthase (F1-ATPase), gamma subunit"/>
    <property type="match status" value="1"/>
</dbReference>
<proteinExistence type="inferred from homology"/>